<organism>
    <name type="scientific">Bacillus anthracis</name>
    <dbReference type="NCBI Taxonomy" id="1392"/>
    <lineage>
        <taxon>Bacteria</taxon>
        <taxon>Bacillati</taxon>
        <taxon>Bacillota</taxon>
        <taxon>Bacilli</taxon>
        <taxon>Bacillales</taxon>
        <taxon>Bacillaceae</taxon>
        <taxon>Bacillus</taxon>
        <taxon>Bacillus cereus group</taxon>
    </lineage>
</organism>
<proteinExistence type="inferred from homology"/>
<name>PSTB_BACAN</name>
<gene>
    <name evidence="1" type="primary">pstB</name>
    <name type="ordered locus">BA_4493</name>
    <name type="ordered locus">GBAA_4493</name>
    <name type="ordered locus">BAS4171</name>
</gene>
<dbReference type="EC" id="7.3.2.1" evidence="1"/>
<dbReference type="EMBL" id="AE016879">
    <property type="protein sequence ID" value="AAP28204.1"/>
    <property type="molecule type" value="Genomic_DNA"/>
</dbReference>
<dbReference type="EMBL" id="AE017334">
    <property type="protein sequence ID" value="AAT33612.1"/>
    <property type="molecule type" value="Genomic_DNA"/>
</dbReference>
<dbReference type="EMBL" id="AE017225">
    <property type="protein sequence ID" value="AAT56471.1"/>
    <property type="molecule type" value="Genomic_DNA"/>
</dbReference>
<dbReference type="RefSeq" id="NP_846718.1">
    <property type="nucleotide sequence ID" value="NC_003997.3"/>
</dbReference>
<dbReference type="RefSeq" id="WP_000226683.1">
    <property type="nucleotide sequence ID" value="NZ_WXXJ01000027.1"/>
</dbReference>
<dbReference type="RefSeq" id="YP_030420.1">
    <property type="nucleotide sequence ID" value="NC_005945.1"/>
</dbReference>
<dbReference type="SMR" id="Q81LW6"/>
<dbReference type="STRING" id="261594.GBAA_4493"/>
<dbReference type="DNASU" id="1088009"/>
<dbReference type="GeneID" id="93006830"/>
<dbReference type="KEGG" id="ban:BA_4493"/>
<dbReference type="KEGG" id="bar:GBAA_4493"/>
<dbReference type="KEGG" id="bat:BAS4171"/>
<dbReference type="PATRIC" id="fig|198094.11.peg.4461"/>
<dbReference type="eggNOG" id="COG1117">
    <property type="taxonomic scope" value="Bacteria"/>
</dbReference>
<dbReference type="HOGENOM" id="CLU_000604_1_22_9"/>
<dbReference type="OMA" id="TMSIYEN"/>
<dbReference type="OrthoDB" id="9802185at2"/>
<dbReference type="Proteomes" id="UP000000427">
    <property type="component" value="Chromosome"/>
</dbReference>
<dbReference type="Proteomes" id="UP000000594">
    <property type="component" value="Chromosome"/>
</dbReference>
<dbReference type="GO" id="GO:0005886">
    <property type="term" value="C:plasma membrane"/>
    <property type="evidence" value="ECO:0007669"/>
    <property type="project" value="UniProtKB-SubCell"/>
</dbReference>
<dbReference type="GO" id="GO:0005524">
    <property type="term" value="F:ATP binding"/>
    <property type="evidence" value="ECO:0007669"/>
    <property type="project" value="UniProtKB-KW"/>
</dbReference>
<dbReference type="GO" id="GO:0016887">
    <property type="term" value="F:ATP hydrolysis activity"/>
    <property type="evidence" value="ECO:0007669"/>
    <property type="project" value="InterPro"/>
</dbReference>
<dbReference type="GO" id="GO:0015415">
    <property type="term" value="F:ATPase-coupled phosphate ion transmembrane transporter activity"/>
    <property type="evidence" value="ECO:0007669"/>
    <property type="project" value="UniProtKB-EC"/>
</dbReference>
<dbReference type="GO" id="GO:0035435">
    <property type="term" value="P:phosphate ion transmembrane transport"/>
    <property type="evidence" value="ECO:0007669"/>
    <property type="project" value="InterPro"/>
</dbReference>
<dbReference type="CDD" id="cd03260">
    <property type="entry name" value="ABC_PstB_phosphate_transporter"/>
    <property type="match status" value="1"/>
</dbReference>
<dbReference type="FunFam" id="3.40.50.300:FF:000132">
    <property type="entry name" value="Phosphate import ATP-binding protein PstB"/>
    <property type="match status" value="1"/>
</dbReference>
<dbReference type="Gene3D" id="3.40.50.300">
    <property type="entry name" value="P-loop containing nucleotide triphosphate hydrolases"/>
    <property type="match status" value="1"/>
</dbReference>
<dbReference type="InterPro" id="IPR003593">
    <property type="entry name" value="AAA+_ATPase"/>
</dbReference>
<dbReference type="InterPro" id="IPR003439">
    <property type="entry name" value="ABC_transporter-like_ATP-bd"/>
</dbReference>
<dbReference type="InterPro" id="IPR017871">
    <property type="entry name" value="ABC_transporter-like_CS"/>
</dbReference>
<dbReference type="InterPro" id="IPR027417">
    <property type="entry name" value="P-loop_NTPase"/>
</dbReference>
<dbReference type="InterPro" id="IPR005670">
    <property type="entry name" value="PstB-like"/>
</dbReference>
<dbReference type="NCBIfam" id="TIGR00972">
    <property type="entry name" value="3a0107s01c2"/>
    <property type="match status" value="1"/>
</dbReference>
<dbReference type="PANTHER" id="PTHR43423">
    <property type="entry name" value="ABC TRANSPORTER I FAMILY MEMBER 17"/>
    <property type="match status" value="1"/>
</dbReference>
<dbReference type="PANTHER" id="PTHR43423:SF1">
    <property type="entry name" value="ABC TRANSPORTER I FAMILY MEMBER 17"/>
    <property type="match status" value="1"/>
</dbReference>
<dbReference type="Pfam" id="PF00005">
    <property type="entry name" value="ABC_tran"/>
    <property type="match status" value="1"/>
</dbReference>
<dbReference type="SMART" id="SM00382">
    <property type="entry name" value="AAA"/>
    <property type="match status" value="1"/>
</dbReference>
<dbReference type="SUPFAM" id="SSF52540">
    <property type="entry name" value="P-loop containing nucleoside triphosphate hydrolases"/>
    <property type="match status" value="1"/>
</dbReference>
<dbReference type="PROSITE" id="PS00211">
    <property type="entry name" value="ABC_TRANSPORTER_1"/>
    <property type="match status" value="1"/>
</dbReference>
<dbReference type="PROSITE" id="PS50893">
    <property type="entry name" value="ABC_TRANSPORTER_2"/>
    <property type="match status" value="1"/>
</dbReference>
<dbReference type="PROSITE" id="PS51238">
    <property type="entry name" value="PSTB"/>
    <property type="match status" value="1"/>
</dbReference>
<evidence type="ECO:0000255" key="1">
    <source>
        <dbReference type="HAMAP-Rule" id="MF_01702"/>
    </source>
</evidence>
<feature type="chain" id="PRO_0000092771" description="Phosphate import ATP-binding protein PstB">
    <location>
        <begin position="1"/>
        <end position="271"/>
    </location>
</feature>
<feature type="domain" description="ABC transporter" evidence="1">
    <location>
        <begin position="25"/>
        <end position="266"/>
    </location>
</feature>
<feature type="binding site" evidence="1">
    <location>
        <begin position="57"/>
        <end position="64"/>
    </location>
    <ligand>
        <name>ATP</name>
        <dbReference type="ChEBI" id="CHEBI:30616"/>
    </ligand>
</feature>
<comment type="function">
    <text evidence="1">Part of the ABC transporter complex PstSACB involved in phosphate import. Responsible for energy coupling to the transport system.</text>
</comment>
<comment type="catalytic activity">
    <reaction evidence="1">
        <text>phosphate(out) + ATP + H2O = ADP + 2 phosphate(in) + H(+)</text>
        <dbReference type="Rhea" id="RHEA:24440"/>
        <dbReference type="ChEBI" id="CHEBI:15377"/>
        <dbReference type="ChEBI" id="CHEBI:15378"/>
        <dbReference type="ChEBI" id="CHEBI:30616"/>
        <dbReference type="ChEBI" id="CHEBI:43474"/>
        <dbReference type="ChEBI" id="CHEBI:456216"/>
        <dbReference type="EC" id="7.3.2.1"/>
    </reaction>
</comment>
<comment type="subunit">
    <text evidence="1">The complex is composed of two ATP-binding proteins (PstB), two transmembrane proteins (PstC and PstA) and a solute-binding protein (PstS).</text>
</comment>
<comment type="subcellular location">
    <subcellularLocation>
        <location evidence="1">Cell membrane</location>
        <topology evidence="1">Peripheral membrane protein</topology>
    </subcellularLocation>
</comment>
<comment type="similarity">
    <text evidence="1">Belongs to the ABC transporter superfamily. Phosphate importer (TC 3.A.1.7) family.</text>
</comment>
<reference key="1">
    <citation type="journal article" date="2003" name="Nature">
        <title>The genome sequence of Bacillus anthracis Ames and comparison to closely related bacteria.</title>
        <authorList>
            <person name="Read T.D."/>
            <person name="Peterson S.N."/>
            <person name="Tourasse N.J."/>
            <person name="Baillie L.W."/>
            <person name="Paulsen I.T."/>
            <person name="Nelson K.E."/>
            <person name="Tettelin H."/>
            <person name="Fouts D.E."/>
            <person name="Eisen J.A."/>
            <person name="Gill S.R."/>
            <person name="Holtzapple E.K."/>
            <person name="Okstad O.A."/>
            <person name="Helgason E."/>
            <person name="Rilstone J."/>
            <person name="Wu M."/>
            <person name="Kolonay J.F."/>
            <person name="Beanan M.J."/>
            <person name="Dodson R.J."/>
            <person name="Brinkac L.M."/>
            <person name="Gwinn M.L."/>
            <person name="DeBoy R.T."/>
            <person name="Madpu R."/>
            <person name="Daugherty S.C."/>
            <person name="Durkin A.S."/>
            <person name="Haft D.H."/>
            <person name="Nelson W.C."/>
            <person name="Peterson J.D."/>
            <person name="Pop M."/>
            <person name="Khouri H.M."/>
            <person name="Radune D."/>
            <person name="Benton J.L."/>
            <person name="Mahamoud Y."/>
            <person name="Jiang L."/>
            <person name="Hance I.R."/>
            <person name="Weidman J.F."/>
            <person name="Berry K.J."/>
            <person name="Plaut R.D."/>
            <person name="Wolf A.M."/>
            <person name="Watkins K.L."/>
            <person name="Nierman W.C."/>
            <person name="Hazen A."/>
            <person name="Cline R.T."/>
            <person name="Redmond C."/>
            <person name="Thwaite J.E."/>
            <person name="White O."/>
            <person name="Salzberg S.L."/>
            <person name="Thomason B."/>
            <person name="Friedlander A.M."/>
            <person name="Koehler T.M."/>
            <person name="Hanna P.C."/>
            <person name="Kolstoe A.-B."/>
            <person name="Fraser C.M."/>
        </authorList>
    </citation>
    <scope>NUCLEOTIDE SEQUENCE [LARGE SCALE GENOMIC DNA]</scope>
    <source>
        <strain>Ames / isolate Porton</strain>
    </source>
</reference>
<reference key="2">
    <citation type="journal article" date="2009" name="J. Bacteriol.">
        <title>The complete genome sequence of Bacillus anthracis Ames 'Ancestor'.</title>
        <authorList>
            <person name="Ravel J."/>
            <person name="Jiang L."/>
            <person name="Stanley S.T."/>
            <person name="Wilson M.R."/>
            <person name="Decker R.S."/>
            <person name="Read T.D."/>
            <person name="Worsham P."/>
            <person name="Keim P.S."/>
            <person name="Salzberg S.L."/>
            <person name="Fraser-Liggett C.M."/>
            <person name="Rasko D.A."/>
        </authorList>
    </citation>
    <scope>NUCLEOTIDE SEQUENCE [LARGE SCALE GENOMIC DNA]</scope>
    <source>
        <strain>Ames ancestor</strain>
    </source>
</reference>
<reference key="3">
    <citation type="submission" date="2004-01" db="EMBL/GenBank/DDBJ databases">
        <title>Complete genome sequence of Bacillus anthracis Sterne.</title>
        <authorList>
            <person name="Brettin T.S."/>
            <person name="Bruce D."/>
            <person name="Challacombe J.F."/>
            <person name="Gilna P."/>
            <person name="Han C."/>
            <person name="Hill K."/>
            <person name="Hitchcock P."/>
            <person name="Jackson P."/>
            <person name="Keim P."/>
            <person name="Longmire J."/>
            <person name="Lucas S."/>
            <person name="Okinaka R."/>
            <person name="Richardson P."/>
            <person name="Rubin E."/>
            <person name="Tice H."/>
        </authorList>
    </citation>
    <scope>NUCLEOTIDE SEQUENCE [LARGE SCALE GENOMIC DNA]</scope>
    <source>
        <strain>Sterne</strain>
    </source>
</reference>
<sequence length="271" mass="30617">MVATVVNVQVKNEEKIETAPKKVVFDTKNLNLWYGEDHALKDINLSIHENEVTAIIGPSGCGKSTYLKTLNRMVELVPIVRTTGVIEYRERNIFDKSYPVEELRTHVGMVFQKPNPFPKSIYENVAYGPKIHGISDKKTLDEIVEKSLRGAAIWDELKDRLHDNAYGLSGGQQQRLCIARCLAIEPDVILMDEPTSALDPISTLKVEELIQELKKDFSIVIVTHNMQQAARISDKTAFFLSGEVVEYTDTNKLFTTPSDKRTEDYITGRFG</sequence>
<protein>
    <recommendedName>
        <fullName evidence="1">Phosphate import ATP-binding protein PstB</fullName>
        <ecNumber evidence="1">7.3.2.1</ecNumber>
    </recommendedName>
    <alternativeName>
        <fullName evidence="1">ABC phosphate transporter</fullName>
    </alternativeName>
    <alternativeName>
        <fullName evidence="1">Phosphate-transporting ATPase</fullName>
    </alternativeName>
</protein>
<accession>Q81LW6</accession>
<accession>Q6HTB8</accession>
<accession>Q6KML0</accession>
<keyword id="KW-0067">ATP-binding</keyword>
<keyword id="KW-1003">Cell membrane</keyword>
<keyword id="KW-0472">Membrane</keyword>
<keyword id="KW-0547">Nucleotide-binding</keyword>
<keyword id="KW-0592">Phosphate transport</keyword>
<keyword id="KW-1185">Reference proteome</keyword>
<keyword id="KW-1278">Translocase</keyword>
<keyword id="KW-0813">Transport</keyword>